<accession>Q2UCT7</accession>
<evidence type="ECO:0000250" key="1"/>
<evidence type="ECO:0000255" key="2"/>
<evidence type="ECO:0000305" key="3"/>
<sequence>MKITSTIPAVLLGLAPLSAAVSVSGSAEGFASGVTGGGDAEAQIPSDIDELKEWLTDDTPRVIVLDKEYDFTESEGTTSGTVCASWGTGSGCQKIIQDDCGDSPSSQATWYTAGTTGIDVASDKTILGDGDKGVIKGKGLRFRDGVSNIIVQNIEISDLNPEYVWGGDALYFDGSDLIWIDHVTTARTGRQHYTFGYETNTRITLSNNFINGETTYSTGCDGYTYWTFEMVGEADQITLQNNYIYMTAGRSPALSGGTLLHAVNNVWEKNNGHALEGGDAGARGIFEGNAWIGVSTIVGDYAGRLFNAPDSSSAGDCESALGRACEVNAVSDSGDLTAYTDTSFFSDFSGLTIAPATSATDAQSSVPNNAGMGKL</sequence>
<name>PELC_ASPOR</name>
<gene>
    <name type="primary">pelC</name>
    <name type="ORF">AO090012000451</name>
</gene>
<protein>
    <recommendedName>
        <fullName>Probable pectin lyase C</fullName>
        <shortName>PLC</shortName>
        <ecNumber>4.2.2.10</ecNumber>
    </recommendedName>
</protein>
<proteinExistence type="inferred from homology"/>
<organism>
    <name type="scientific">Aspergillus oryzae (strain ATCC 42149 / RIB 40)</name>
    <name type="common">Yellow koji mold</name>
    <dbReference type="NCBI Taxonomy" id="510516"/>
    <lineage>
        <taxon>Eukaryota</taxon>
        <taxon>Fungi</taxon>
        <taxon>Dikarya</taxon>
        <taxon>Ascomycota</taxon>
        <taxon>Pezizomycotina</taxon>
        <taxon>Eurotiomycetes</taxon>
        <taxon>Eurotiomycetidae</taxon>
        <taxon>Eurotiales</taxon>
        <taxon>Aspergillaceae</taxon>
        <taxon>Aspergillus</taxon>
        <taxon>Aspergillus subgen. Circumdati</taxon>
    </lineage>
</organism>
<reference key="1">
    <citation type="journal article" date="2005" name="Nature">
        <title>Genome sequencing and analysis of Aspergillus oryzae.</title>
        <authorList>
            <person name="Machida M."/>
            <person name="Asai K."/>
            <person name="Sano M."/>
            <person name="Tanaka T."/>
            <person name="Kumagai T."/>
            <person name="Terai G."/>
            <person name="Kusumoto K."/>
            <person name="Arima T."/>
            <person name="Akita O."/>
            <person name="Kashiwagi Y."/>
            <person name="Abe K."/>
            <person name="Gomi K."/>
            <person name="Horiuchi H."/>
            <person name="Kitamoto K."/>
            <person name="Kobayashi T."/>
            <person name="Takeuchi M."/>
            <person name="Denning D.W."/>
            <person name="Galagan J.E."/>
            <person name="Nierman W.C."/>
            <person name="Yu J."/>
            <person name="Archer D.B."/>
            <person name="Bennett J.W."/>
            <person name="Bhatnagar D."/>
            <person name="Cleveland T.E."/>
            <person name="Fedorova N.D."/>
            <person name="Gotoh O."/>
            <person name="Horikawa H."/>
            <person name="Hosoyama A."/>
            <person name="Ichinomiya M."/>
            <person name="Igarashi R."/>
            <person name="Iwashita K."/>
            <person name="Juvvadi P.R."/>
            <person name="Kato M."/>
            <person name="Kato Y."/>
            <person name="Kin T."/>
            <person name="Kokubun A."/>
            <person name="Maeda H."/>
            <person name="Maeyama N."/>
            <person name="Maruyama J."/>
            <person name="Nagasaki H."/>
            <person name="Nakajima T."/>
            <person name="Oda K."/>
            <person name="Okada K."/>
            <person name="Paulsen I."/>
            <person name="Sakamoto K."/>
            <person name="Sawano T."/>
            <person name="Takahashi M."/>
            <person name="Takase K."/>
            <person name="Terabayashi Y."/>
            <person name="Wortman J.R."/>
            <person name="Yamada O."/>
            <person name="Yamagata Y."/>
            <person name="Anazawa H."/>
            <person name="Hata Y."/>
            <person name="Koide Y."/>
            <person name="Komori T."/>
            <person name="Koyama Y."/>
            <person name="Minetoki T."/>
            <person name="Suharnan S."/>
            <person name="Tanaka A."/>
            <person name="Isono K."/>
            <person name="Kuhara S."/>
            <person name="Ogasawara N."/>
            <person name="Kikuchi H."/>
        </authorList>
    </citation>
    <scope>NUCLEOTIDE SEQUENCE [LARGE SCALE GENOMIC DNA]</scope>
    <source>
        <strain>ATCC 42149 / RIB 40</strain>
    </source>
</reference>
<comment type="function">
    <text evidence="1">Pectinolytic enzymes consist of four classes of enzymes: pectin lyase, polygalacturonase, pectin methylesterase and rhamnogalacturonase. Among pectinolytic enzymes, pectin lyase is the most important in depolymerization of pectin, since it cleaves internal glycosidic bonds of highly methylated pectins (By similarity).</text>
</comment>
<comment type="catalytic activity">
    <reaction>
        <text>Eliminative cleavage of (1-&gt;4)-alpha-D-galacturonan methyl ester to give oligosaccharides with 4-deoxy-6-O-methyl-alpha-D-galact-4-enuronosyl groups at their non-reducing ends.</text>
        <dbReference type="EC" id="4.2.2.10"/>
    </reaction>
</comment>
<comment type="subcellular location">
    <subcellularLocation>
        <location evidence="1">Secreted</location>
    </subcellularLocation>
</comment>
<comment type="similarity">
    <text evidence="3">Belongs to the polysaccharide lyase 1 family.</text>
</comment>
<feature type="signal peptide" evidence="2">
    <location>
        <begin position="1"/>
        <end position="20"/>
    </location>
</feature>
<feature type="chain" id="PRO_0000394350" description="Probable pectin lyase C">
    <location>
        <begin position="21"/>
        <end position="375"/>
    </location>
</feature>
<feature type="active site" evidence="2">
    <location>
        <position position="250"/>
    </location>
</feature>
<feature type="disulfide bond" evidence="1">
    <location>
        <begin position="83"/>
        <end position="100"/>
    </location>
</feature>
<feature type="disulfide bond" evidence="1">
    <location>
        <begin position="92"/>
        <end position="220"/>
    </location>
</feature>
<feature type="disulfide bond" evidence="1">
    <location>
        <begin position="317"/>
        <end position="325"/>
    </location>
</feature>
<dbReference type="EC" id="4.2.2.10"/>
<dbReference type="EMBL" id="BA000052">
    <property type="protein sequence ID" value="BAE60628.1"/>
    <property type="molecule type" value="Genomic_DNA"/>
</dbReference>
<dbReference type="RefSeq" id="XP_001727467.1">
    <property type="nucleotide sequence ID" value="XM_001727415.1"/>
</dbReference>
<dbReference type="SMR" id="Q2UCT7"/>
<dbReference type="STRING" id="510516.Q2UCT7"/>
<dbReference type="CAZy" id="PL1">
    <property type="family name" value="Polysaccharide Lyase Family 1"/>
</dbReference>
<dbReference type="EnsemblFungi" id="BAE60628">
    <property type="protein sequence ID" value="BAE60628"/>
    <property type="gene ID" value="AO090012000451"/>
</dbReference>
<dbReference type="GeneID" id="5987941"/>
<dbReference type="KEGG" id="aor:AO090012000451"/>
<dbReference type="VEuPathDB" id="FungiDB:AO090012000451"/>
<dbReference type="HOGENOM" id="CLU_021980_0_1_1"/>
<dbReference type="OMA" id="CQSTIDI"/>
<dbReference type="OrthoDB" id="30212at5052"/>
<dbReference type="Proteomes" id="UP000006564">
    <property type="component" value="Chromosome 4"/>
</dbReference>
<dbReference type="GO" id="GO:0005576">
    <property type="term" value="C:extracellular region"/>
    <property type="evidence" value="ECO:0007669"/>
    <property type="project" value="UniProtKB-SubCell"/>
</dbReference>
<dbReference type="GO" id="GO:0030570">
    <property type="term" value="F:pectate lyase activity"/>
    <property type="evidence" value="ECO:0007669"/>
    <property type="project" value="InterPro"/>
</dbReference>
<dbReference type="GO" id="GO:0047490">
    <property type="term" value="F:pectin lyase activity"/>
    <property type="evidence" value="ECO:0000250"/>
    <property type="project" value="UniProtKB"/>
</dbReference>
<dbReference type="GO" id="GO:0071555">
    <property type="term" value="P:cell wall organization"/>
    <property type="evidence" value="ECO:0007669"/>
    <property type="project" value="UniProtKB-KW"/>
</dbReference>
<dbReference type="GO" id="GO:0045490">
    <property type="term" value="P:pectin catabolic process"/>
    <property type="evidence" value="ECO:0000250"/>
    <property type="project" value="UniProtKB"/>
</dbReference>
<dbReference type="FunFam" id="2.160.20.10:FF:000003">
    <property type="entry name" value="Pectin lyase F"/>
    <property type="match status" value="1"/>
</dbReference>
<dbReference type="Gene3D" id="2.160.20.10">
    <property type="entry name" value="Single-stranded right-handed beta-helix, Pectin lyase-like"/>
    <property type="match status" value="1"/>
</dbReference>
<dbReference type="InterPro" id="IPR002022">
    <property type="entry name" value="Pec_lyase"/>
</dbReference>
<dbReference type="InterPro" id="IPR012334">
    <property type="entry name" value="Pectin_lyas_fold"/>
</dbReference>
<dbReference type="InterPro" id="IPR011050">
    <property type="entry name" value="Pectin_lyase_fold/virulence"/>
</dbReference>
<dbReference type="InterPro" id="IPR045032">
    <property type="entry name" value="PEL"/>
</dbReference>
<dbReference type="PANTHER" id="PTHR31683">
    <property type="entry name" value="PECTATE LYASE 18-RELATED"/>
    <property type="match status" value="1"/>
</dbReference>
<dbReference type="PANTHER" id="PTHR31683:SF16">
    <property type="entry name" value="PECTIN LYASE A-RELATED"/>
    <property type="match status" value="1"/>
</dbReference>
<dbReference type="Pfam" id="PF00544">
    <property type="entry name" value="Pectate_lyase_4"/>
    <property type="match status" value="1"/>
</dbReference>
<dbReference type="SMART" id="SM00656">
    <property type="entry name" value="Amb_all"/>
    <property type="match status" value="1"/>
</dbReference>
<dbReference type="SUPFAM" id="SSF51126">
    <property type="entry name" value="Pectin lyase-like"/>
    <property type="match status" value="1"/>
</dbReference>
<keyword id="KW-0119">Carbohydrate metabolism</keyword>
<keyword id="KW-0961">Cell wall biogenesis/degradation</keyword>
<keyword id="KW-1015">Disulfide bond</keyword>
<keyword id="KW-0456">Lyase</keyword>
<keyword id="KW-0624">Polysaccharide degradation</keyword>
<keyword id="KW-1185">Reference proteome</keyword>
<keyword id="KW-0964">Secreted</keyword>
<keyword id="KW-0732">Signal</keyword>